<feature type="chain" id="PRO_1000047887" description="Protein RecA">
    <location>
        <begin position="1"/>
        <end position="344"/>
    </location>
</feature>
<feature type="binding site" evidence="1">
    <location>
        <begin position="66"/>
        <end position="73"/>
    </location>
    <ligand>
        <name>ATP</name>
        <dbReference type="ChEBI" id="CHEBI:30616"/>
    </ligand>
</feature>
<name>RECA_AZOSB</name>
<accession>A1K2R9</accession>
<protein>
    <recommendedName>
        <fullName evidence="1">Protein RecA</fullName>
    </recommendedName>
    <alternativeName>
        <fullName evidence="1">Recombinase A</fullName>
    </alternativeName>
</protein>
<sequence length="344" mass="36757">MDDNKAKALAAALSQIEKQFGKGSIMRMGDGNVEKDIQTVSTGSLGLDIALGLGGLPRGRVVEIYGPESSGKTTLTLQVVAEMQKLGGTAAFIDAEHALDVGYAEKLGVNITDLLISQPDTGEQALEIADMLVRSGGVDVVVIDSVAALTPKAEIEGEMGDQLPGLQARLMSQALRKLTANIKRTNTLVIFINQIRMKIGVMFGNPETTTGGNALKFYASVRMDIRRTGTIKRGDEVVGSETKVKVVKNKVSPPFKEAHFDILYGEGVSREGEIIDLGVDHKIVDKSGAWYAYNGDKIGQGKDNAREFLRANPALAREIENKVRVVLGLKELPVDGAQPAAAEA</sequence>
<dbReference type="EMBL" id="AM406670">
    <property type="protein sequence ID" value="CAL93124.1"/>
    <property type="molecule type" value="Genomic_DNA"/>
</dbReference>
<dbReference type="RefSeq" id="WP_011764242.1">
    <property type="nucleotide sequence ID" value="NC_008702.1"/>
</dbReference>
<dbReference type="SMR" id="A1K2R9"/>
<dbReference type="STRING" id="62928.azo0507"/>
<dbReference type="KEGG" id="aoa:dqs_0517"/>
<dbReference type="KEGG" id="azo:azo0507"/>
<dbReference type="eggNOG" id="COG0468">
    <property type="taxonomic scope" value="Bacteria"/>
</dbReference>
<dbReference type="HOGENOM" id="CLU_040469_1_2_4"/>
<dbReference type="OrthoDB" id="9776733at2"/>
<dbReference type="Proteomes" id="UP000002588">
    <property type="component" value="Chromosome"/>
</dbReference>
<dbReference type="GO" id="GO:0005829">
    <property type="term" value="C:cytosol"/>
    <property type="evidence" value="ECO:0007669"/>
    <property type="project" value="TreeGrafter"/>
</dbReference>
<dbReference type="GO" id="GO:0005524">
    <property type="term" value="F:ATP binding"/>
    <property type="evidence" value="ECO:0007669"/>
    <property type="project" value="UniProtKB-UniRule"/>
</dbReference>
<dbReference type="GO" id="GO:0016887">
    <property type="term" value="F:ATP hydrolysis activity"/>
    <property type="evidence" value="ECO:0007669"/>
    <property type="project" value="InterPro"/>
</dbReference>
<dbReference type="GO" id="GO:0140664">
    <property type="term" value="F:ATP-dependent DNA damage sensor activity"/>
    <property type="evidence" value="ECO:0007669"/>
    <property type="project" value="InterPro"/>
</dbReference>
<dbReference type="GO" id="GO:0003684">
    <property type="term" value="F:damaged DNA binding"/>
    <property type="evidence" value="ECO:0007669"/>
    <property type="project" value="UniProtKB-UniRule"/>
</dbReference>
<dbReference type="GO" id="GO:0003697">
    <property type="term" value="F:single-stranded DNA binding"/>
    <property type="evidence" value="ECO:0007669"/>
    <property type="project" value="UniProtKB-UniRule"/>
</dbReference>
<dbReference type="GO" id="GO:0006310">
    <property type="term" value="P:DNA recombination"/>
    <property type="evidence" value="ECO:0007669"/>
    <property type="project" value="UniProtKB-UniRule"/>
</dbReference>
<dbReference type="GO" id="GO:0006281">
    <property type="term" value="P:DNA repair"/>
    <property type="evidence" value="ECO:0007669"/>
    <property type="project" value="UniProtKB-UniRule"/>
</dbReference>
<dbReference type="GO" id="GO:0009432">
    <property type="term" value="P:SOS response"/>
    <property type="evidence" value="ECO:0007669"/>
    <property type="project" value="UniProtKB-UniRule"/>
</dbReference>
<dbReference type="CDD" id="cd00983">
    <property type="entry name" value="RecA"/>
    <property type="match status" value="1"/>
</dbReference>
<dbReference type="FunFam" id="3.40.50.300:FF:000087">
    <property type="entry name" value="Recombinase RecA"/>
    <property type="match status" value="1"/>
</dbReference>
<dbReference type="Gene3D" id="3.40.50.300">
    <property type="entry name" value="P-loop containing nucleotide triphosphate hydrolases"/>
    <property type="match status" value="1"/>
</dbReference>
<dbReference type="HAMAP" id="MF_00268">
    <property type="entry name" value="RecA"/>
    <property type="match status" value="1"/>
</dbReference>
<dbReference type="InterPro" id="IPR003593">
    <property type="entry name" value="AAA+_ATPase"/>
</dbReference>
<dbReference type="InterPro" id="IPR013765">
    <property type="entry name" value="DNA_recomb/repair_RecA"/>
</dbReference>
<dbReference type="InterPro" id="IPR020584">
    <property type="entry name" value="DNA_recomb/repair_RecA_CS"/>
</dbReference>
<dbReference type="InterPro" id="IPR027417">
    <property type="entry name" value="P-loop_NTPase"/>
</dbReference>
<dbReference type="InterPro" id="IPR049261">
    <property type="entry name" value="RecA-like_C"/>
</dbReference>
<dbReference type="InterPro" id="IPR049428">
    <property type="entry name" value="RecA-like_N"/>
</dbReference>
<dbReference type="InterPro" id="IPR020588">
    <property type="entry name" value="RecA_ATP-bd"/>
</dbReference>
<dbReference type="InterPro" id="IPR023400">
    <property type="entry name" value="RecA_C_sf"/>
</dbReference>
<dbReference type="InterPro" id="IPR020587">
    <property type="entry name" value="RecA_monomer-monomer_interface"/>
</dbReference>
<dbReference type="NCBIfam" id="TIGR02012">
    <property type="entry name" value="tigrfam_recA"/>
    <property type="match status" value="1"/>
</dbReference>
<dbReference type="PANTHER" id="PTHR45900:SF1">
    <property type="entry name" value="MITOCHONDRIAL DNA REPAIR PROTEIN RECA HOMOLOG-RELATED"/>
    <property type="match status" value="1"/>
</dbReference>
<dbReference type="PANTHER" id="PTHR45900">
    <property type="entry name" value="RECA"/>
    <property type="match status" value="1"/>
</dbReference>
<dbReference type="Pfam" id="PF00154">
    <property type="entry name" value="RecA"/>
    <property type="match status" value="1"/>
</dbReference>
<dbReference type="Pfam" id="PF21096">
    <property type="entry name" value="RecA_C"/>
    <property type="match status" value="1"/>
</dbReference>
<dbReference type="PRINTS" id="PR00142">
    <property type="entry name" value="RECA"/>
</dbReference>
<dbReference type="SMART" id="SM00382">
    <property type="entry name" value="AAA"/>
    <property type="match status" value="1"/>
</dbReference>
<dbReference type="SUPFAM" id="SSF52540">
    <property type="entry name" value="P-loop containing nucleoside triphosphate hydrolases"/>
    <property type="match status" value="1"/>
</dbReference>
<dbReference type="SUPFAM" id="SSF54752">
    <property type="entry name" value="RecA protein, C-terminal domain"/>
    <property type="match status" value="1"/>
</dbReference>
<dbReference type="PROSITE" id="PS00321">
    <property type="entry name" value="RECA_1"/>
    <property type="match status" value="1"/>
</dbReference>
<dbReference type="PROSITE" id="PS50162">
    <property type="entry name" value="RECA_2"/>
    <property type="match status" value="1"/>
</dbReference>
<dbReference type="PROSITE" id="PS50163">
    <property type="entry name" value="RECA_3"/>
    <property type="match status" value="1"/>
</dbReference>
<proteinExistence type="inferred from homology"/>
<gene>
    <name evidence="1" type="primary">recA</name>
    <name type="ordered locus">azo0507</name>
</gene>
<reference key="1">
    <citation type="journal article" date="2006" name="Nat. Biotechnol.">
        <title>Complete genome of the mutualistic, N2-fixing grass endophyte Azoarcus sp. strain BH72.</title>
        <authorList>
            <person name="Krause A."/>
            <person name="Ramakumar A."/>
            <person name="Bartels D."/>
            <person name="Battistoni F."/>
            <person name="Bekel T."/>
            <person name="Boch J."/>
            <person name="Boehm M."/>
            <person name="Friedrich F."/>
            <person name="Hurek T."/>
            <person name="Krause L."/>
            <person name="Linke B."/>
            <person name="McHardy A.C."/>
            <person name="Sarkar A."/>
            <person name="Schneiker S."/>
            <person name="Syed A.A."/>
            <person name="Thauer R."/>
            <person name="Vorhoelter F.-J."/>
            <person name="Weidner S."/>
            <person name="Puehler A."/>
            <person name="Reinhold-Hurek B."/>
            <person name="Kaiser O."/>
            <person name="Goesmann A."/>
        </authorList>
    </citation>
    <scope>NUCLEOTIDE SEQUENCE [LARGE SCALE GENOMIC DNA]</scope>
    <source>
        <strain>BH72</strain>
    </source>
</reference>
<evidence type="ECO:0000255" key="1">
    <source>
        <dbReference type="HAMAP-Rule" id="MF_00268"/>
    </source>
</evidence>
<organism>
    <name type="scientific">Azoarcus sp. (strain BH72)</name>
    <dbReference type="NCBI Taxonomy" id="418699"/>
    <lineage>
        <taxon>Bacteria</taxon>
        <taxon>Pseudomonadati</taxon>
        <taxon>Pseudomonadota</taxon>
        <taxon>Betaproteobacteria</taxon>
        <taxon>Rhodocyclales</taxon>
        <taxon>Zoogloeaceae</taxon>
        <taxon>Azoarcus</taxon>
    </lineage>
</organism>
<comment type="function">
    <text evidence="1">Can catalyze the hydrolysis of ATP in the presence of single-stranded DNA, the ATP-dependent uptake of single-stranded DNA by duplex DNA, and the ATP-dependent hybridization of homologous single-stranded DNAs. It interacts with LexA causing its activation and leading to its autocatalytic cleavage.</text>
</comment>
<comment type="subcellular location">
    <subcellularLocation>
        <location evidence="1">Cytoplasm</location>
    </subcellularLocation>
</comment>
<comment type="similarity">
    <text evidence="1">Belongs to the RecA family.</text>
</comment>
<keyword id="KW-0067">ATP-binding</keyword>
<keyword id="KW-0963">Cytoplasm</keyword>
<keyword id="KW-0227">DNA damage</keyword>
<keyword id="KW-0233">DNA recombination</keyword>
<keyword id="KW-0234">DNA repair</keyword>
<keyword id="KW-0238">DNA-binding</keyword>
<keyword id="KW-0547">Nucleotide-binding</keyword>
<keyword id="KW-1185">Reference proteome</keyword>
<keyword id="KW-0742">SOS response</keyword>